<dbReference type="EMBL" id="AY509253">
    <property type="protein sequence ID" value="AAS00948.1"/>
    <property type="molecule type" value="Genomic_DNA"/>
</dbReference>
<dbReference type="RefSeq" id="YP_024601.1">
    <property type="nucleotide sequence ID" value="NC_005881.2"/>
</dbReference>
<dbReference type="KEGG" id="vg:2948164"/>
<dbReference type="Proteomes" id="UP000007021">
    <property type="component" value="Segment"/>
</dbReference>
<reference key="1">
    <citation type="journal article" date="2005" name="J. Gen. Virol.">
        <title>A novel class of herpesvirus with bivalve hosts.</title>
        <authorList>
            <person name="Davison A.J."/>
            <person name="Trus B.L."/>
            <person name="Cheng N."/>
            <person name="Steven A.C."/>
            <person name="Watson M.S."/>
            <person name="Cunningham C."/>
            <person name="Le Deuff R.M."/>
            <person name="Renault T."/>
        </authorList>
    </citation>
    <scope>NUCLEOTIDE SEQUENCE [LARGE SCALE GENOMIC DNA]</scope>
</reference>
<organismHost>
    <name type="scientific">Magallana gigas</name>
    <name type="common">Pacific oyster</name>
    <name type="synonym">Crassostrea gigas</name>
    <dbReference type="NCBI Taxonomy" id="29159"/>
</organismHost>
<organismHost>
    <name type="scientific">Pecten maximus</name>
    <name type="common">King scallop</name>
    <name type="synonym">Pilgrim's clam</name>
    <dbReference type="NCBI Taxonomy" id="6579"/>
</organismHost>
<sequence length="521" mass="60993">MDNIQSYKLAHIFDGSYGKLVYGIKKEFLFAHPELRYTIHYEKNDLFKYSSISKPIDRVISHKTLEKEDRVLIVLDAPITSSDIQIICVELWWKTGYIFIYKRNGMFSDPYRPEIKVETVITGVTNSAISTATEEPREFAEPPPPPATTARSSMQAFTELLERLSGNTAAPQDPTLSELTNLELVKKDEPEIKNKEDGILYGVELSTAIYRKPSDQSIILSPFWCNHKHWVYYSKQFTISAPTLPASKITEMDLEDICKRNFFLNQNKVMLMSLPEKKLSFQPKPQMRPLFIEEMMTQEHLNHLVYECSKTATWALNTLIPEYDIVERLDKVDKGVYNVLFYEKKVKPGRKYDMNTYPLMFYTKYGLRFDHINSSKKFKHIAFCVKREIVGVEVTYYDELMNKEWTELLYGEILPKVPIIQDFLENMERLHRQVVDGNITISAEMSLDIDNRIRRMLDDAVNDIPFHIYFTEDLERYIYHPFFPLPVMSPFAERFIDTDTDAETKRILRFVSEIRSKAENV</sequence>
<gene>
    <name type="ORF">ORF58</name>
</gene>
<keyword id="KW-1185">Reference proteome</keyword>
<protein>
    <recommendedName>
        <fullName>Uncharacterized protein ORF58</fullName>
    </recommendedName>
</protein>
<accession>Q6R7G7</accession>
<name>Y058_OSHVF</name>
<feature type="chain" id="PRO_0000385084" description="Uncharacterized protein ORF58">
    <location>
        <begin position="1"/>
        <end position="521"/>
    </location>
</feature>
<organism>
    <name type="scientific">Ostreid herpesvirus 1 (isolate France)</name>
    <name type="common">OsHV-1</name>
    <name type="synonym">Pacific oyster herpesvirus</name>
    <dbReference type="NCBI Taxonomy" id="654903"/>
    <lineage>
        <taxon>Viruses</taxon>
        <taxon>Duplodnaviria</taxon>
        <taxon>Heunggongvirae</taxon>
        <taxon>Peploviricota</taxon>
        <taxon>Herviviricetes</taxon>
        <taxon>Herpesvirales</taxon>
        <taxon>Malacoherpesviridae</taxon>
        <taxon>Ostreavirus</taxon>
        <taxon>Ostreavirus ostreidmalaco1</taxon>
        <taxon>Ostreid herpesvirus 1</taxon>
    </lineage>
</organism>
<proteinExistence type="predicted"/>